<evidence type="ECO:0000256" key="1">
    <source>
        <dbReference type="SAM" id="MobiDB-lite"/>
    </source>
</evidence>
<evidence type="ECO:0000305" key="2"/>
<reference key="1">
    <citation type="journal article" date="1999" name="Nature">
        <title>Sequence and analysis of chromosome 2 of the plant Arabidopsis thaliana.</title>
        <authorList>
            <person name="Lin X."/>
            <person name="Kaul S."/>
            <person name="Rounsley S.D."/>
            <person name="Shea T.P."/>
            <person name="Benito M.-I."/>
            <person name="Town C.D."/>
            <person name="Fujii C.Y."/>
            <person name="Mason T.M."/>
            <person name="Bowman C.L."/>
            <person name="Barnstead M.E."/>
            <person name="Feldblyum T.V."/>
            <person name="Buell C.R."/>
            <person name="Ketchum K.A."/>
            <person name="Lee J.J."/>
            <person name="Ronning C.M."/>
            <person name="Koo H.L."/>
            <person name="Moffat K.S."/>
            <person name="Cronin L.A."/>
            <person name="Shen M."/>
            <person name="Pai G."/>
            <person name="Van Aken S."/>
            <person name="Umayam L."/>
            <person name="Tallon L.J."/>
            <person name="Gill J.E."/>
            <person name="Adams M.D."/>
            <person name="Carrera A.J."/>
            <person name="Creasy T.H."/>
            <person name="Goodman H.M."/>
            <person name="Somerville C.R."/>
            <person name="Copenhaver G.P."/>
            <person name="Preuss D."/>
            <person name="Nierman W.C."/>
            <person name="White O."/>
            <person name="Eisen J.A."/>
            <person name="Salzberg S.L."/>
            <person name="Fraser C.M."/>
            <person name="Venter J.C."/>
        </authorList>
    </citation>
    <scope>NUCLEOTIDE SEQUENCE [LARGE SCALE GENOMIC DNA]</scope>
    <source>
        <strain>cv. Columbia</strain>
    </source>
</reference>
<reference key="2">
    <citation type="journal article" date="2017" name="Plant J.">
        <title>Araport11: a complete reannotation of the Arabidopsis thaliana reference genome.</title>
        <authorList>
            <person name="Cheng C.Y."/>
            <person name="Krishnakumar V."/>
            <person name="Chan A.P."/>
            <person name="Thibaud-Nissen F."/>
            <person name="Schobel S."/>
            <person name="Town C.D."/>
        </authorList>
    </citation>
    <scope>GENOME REANNOTATION</scope>
    <source>
        <strain>cv. Columbia</strain>
    </source>
</reference>
<reference key="3">
    <citation type="submission" date="2004-10" db="EMBL/GenBank/DDBJ databases">
        <authorList>
            <person name="Underwood B.A."/>
            <person name="Xiao Y.-L."/>
            <person name="Moskal W.A. Jr."/>
            <person name="Monaghan E.L."/>
            <person name="Wang W."/>
            <person name="Redman J.C."/>
            <person name="Wu H.C."/>
            <person name="Utterback T."/>
            <person name="Town C.D."/>
        </authorList>
    </citation>
    <scope>NUCLEOTIDE SEQUENCE [LARGE SCALE GENOMIC DNA]</scope>
    <source>
        <strain>cv. Columbia</strain>
    </source>
</reference>
<reference key="4">
    <citation type="journal article" date="2005" name="Plant Physiol.">
        <title>Analysis of the cDNAs of hypothetical genes on Arabidopsis chromosome 2 reveals numerous transcript variants.</title>
        <authorList>
            <person name="Xiao Y.-L."/>
            <person name="Smith S.R."/>
            <person name="Ishmael N."/>
            <person name="Redman J.C."/>
            <person name="Kumar N."/>
            <person name="Monaghan E.L."/>
            <person name="Ayele M."/>
            <person name="Haas B.J."/>
            <person name="Wu H.C."/>
            <person name="Town C.D."/>
        </authorList>
    </citation>
    <scope>NUCLEOTIDE SEQUENCE [LARGE SCALE MRNA]</scope>
    <source>
        <strain>cv. Columbia</strain>
    </source>
</reference>
<accession>Q84RE1</accession>
<accession>O80509</accession>
<feature type="chain" id="PRO_0000283208" description="F-box/kelch-repeat protein At2g44700">
    <location>
        <begin position="1"/>
        <end position="368"/>
    </location>
</feature>
<feature type="domain" description="F-box">
    <location>
        <begin position="25"/>
        <end position="71"/>
    </location>
</feature>
<feature type="repeat" description="Kelch">
    <location>
        <begin position="177"/>
        <end position="221"/>
    </location>
</feature>
<feature type="region of interest" description="Disordered" evidence="1">
    <location>
        <begin position="1"/>
        <end position="23"/>
    </location>
</feature>
<feature type="compositionally biased region" description="Low complexity" evidence="1">
    <location>
        <begin position="14"/>
        <end position="23"/>
    </location>
</feature>
<feature type="sequence conflict" description="In Ref. 4; AAO89212." evidence="2" ref="4">
    <original>N</original>
    <variation>D</variation>
    <location>
        <position position="297"/>
    </location>
</feature>
<keyword id="KW-0880">Kelch repeat</keyword>
<keyword id="KW-1185">Reference proteome</keyword>
<gene>
    <name type="ordered locus">At2g44700</name>
    <name type="ORF">F16B22.19</name>
</gene>
<name>FBK48_ARATH</name>
<sequence>MSSSNEPPRKTDQPSSSSASASASPSLFLSLPLEIISMILARVPKRYYPILCSVSKNMRSLVRSPEIHKARSLLGKDYLYIGFIDENYRPVYDYWYTLRRIENSTTENLFESIEFPYPSEPNRFSMNAVGPKIFFISESCTPSSRLSIFDTRFGELRQGPCLLVKRGYNCVGLVGGKVYVIGGYQDDEIAAESFDLNTQTWEAAPIPDEKESHRWICKANVSFDRKVCALRSREGMTCYDTRDGSCQRSEMPNDQWSRVGLCVIDNVLFVYFSRFGLMWYDSKLMLWRVVYGFDLDNARSVGIGEYYGKLAFIWEKPSLNVSESKEIWCRMIGLLRSEVGIHGAAEPSQLVEIVPNGYRMCHCLSLSG</sequence>
<protein>
    <recommendedName>
        <fullName>F-box/kelch-repeat protein At2g44700</fullName>
    </recommendedName>
</protein>
<dbReference type="EMBL" id="AC003672">
    <property type="protein sequence ID" value="AAC27472.1"/>
    <property type="molecule type" value="Genomic_DNA"/>
</dbReference>
<dbReference type="EMBL" id="CP002685">
    <property type="protein sequence ID" value="AEC10457.1"/>
    <property type="molecule type" value="Genomic_DNA"/>
</dbReference>
<dbReference type="EMBL" id="AY773871">
    <property type="protein sequence ID" value="AAV63900.1"/>
    <property type="molecule type" value="Genomic_DNA"/>
</dbReference>
<dbReference type="EMBL" id="AY247818">
    <property type="protein sequence ID" value="AAO89212.1"/>
    <property type="molecule type" value="mRNA"/>
</dbReference>
<dbReference type="PIR" id="T01597">
    <property type="entry name" value="T01597"/>
</dbReference>
<dbReference type="RefSeq" id="NP_181998.1">
    <property type="nucleotide sequence ID" value="NM_130034.2"/>
</dbReference>
<dbReference type="SMR" id="Q84RE1"/>
<dbReference type="FunCoup" id="Q84RE1">
    <property type="interactions" value="11"/>
</dbReference>
<dbReference type="STRING" id="3702.Q84RE1"/>
<dbReference type="PaxDb" id="3702-AT2G44700.1"/>
<dbReference type="ProteomicsDB" id="230991"/>
<dbReference type="EnsemblPlants" id="AT2G44700.1">
    <property type="protein sequence ID" value="AT2G44700.1"/>
    <property type="gene ID" value="AT2G44700"/>
</dbReference>
<dbReference type="GeneID" id="819078"/>
<dbReference type="Gramene" id="AT2G44700.1">
    <property type="protein sequence ID" value="AT2G44700.1"/>
    <property type="gene ID" value="AT2G44700"/>
</dbReference>
<dbReference type="KEGG" id="ath:AT2G44700"/>
<dbReference type="Araport" id="AT2G44700"/>
<dbReference type="TAIR" id="AT2G44700"/>
<dbReference type="eggNOG" id="KOG1072">
    <property type="taxonomic scope" value="Eukaryota"/>
</dbReference>
<dbReference type="HOGENOM" id="CLU_032521_0_0_1"/>
<dbReference type="InParanoid" id="Q84RE1"/>
<dbReference type="OMA" id="FFICGAH"/>
<dbReference type="PhylomeDB" id="Q84RE1"/>
<dbReference type="PRO" id="PR:Q84RE1"/>
<dbReference type="Proteomes" id="UP000006548">
    <property type="component" value="Chromosome 2"/>
</dbReference>
<dbReference type="ExpressionAtlas" id="Q84RE1">
    <property type="expression patterns" value="baseline and differential"/>
</dbReference>
<dbReference type="CDD" id="cd22152">
    <property type="entry name" value="F-box_AtAFR-like"/>
    <property type="match status" value="1"/>
</dbReference>
<dbReference type="Gene3D" id="2.120.10.80">
    <property type="entry name" value="Kelch-type beta propeller"/>
    <property type="match status" value="1"/>
</dbReference>
<dbReference type="InterPro" id="IPR036047">
    <property type="entry name" value="F-box-like_dom_sf"/>
</dbReference>
<dbReference type="InterPro" id="IPR050354">
    <property type="entry name" value="F-box/kelch-repeat_ARATH"/>
</dbReference>
<dbReference type="InterPro" id="IPR001810">
    <property type="entry name" value="F-box_dom"/>
</dbReference>
<dbReference type="InterPro" id="IPR015915">
    <property type="entry name" value="Kelch-typ_b-propeller"/>
</dbReference>
<dbReference type="PANTHER" id="PTHR24414:SF75">
    <property type="entry name" value="F-BOX DOMAIN-CONTAINING PROTEIN"/>
    <property type="match status" value="1"/>
</dbReference>
<dbReference type="PANTHER" id="PTHR24414">
    <property type="entry name" value="F-BOX/KELCH-REPEAT PROTEIN SKIP4"/>
    <property type="match status" value="1"/>
</dbReference>
<dbReference type="Pfam" id="PF00646">
    <property type="entry name" value="F-box"/>
    <property type="match status" value="1"/>
</dbReference>
<dbReference type="Pfam" id="PF25210">
    <property type="entry name" value="Kelch_FKB95"/>
    <property type="match status" value="1"/>
</dbReference>
<dbReference type="SMART" id="SM00256">
    <property type="entry name" value="FBOX"/>
    <property type="match status" value="1"/>
</dbReference>
<dbReference type="SUPFAM" id="SSF81383">
    <property type="entry name" value="F-box domain"/>
    <property type="match status" value="1"/>
</dbReference>
<dbReference type="SUPFAM" id="SSF117281">
    <property type="entry name" value="Kelch motif"/>
    <property type="match status" value="1"/>
</dbReference>
<organism>
    <name type="scientific">Arabidopsis thaliana</name>
    <name type="common">Mouse-ear cress</name>
    <dbReference type="NCBI Taxonomy" id="3702"/>
    <lineage>
        <taxon>Eukaryota</taxon>
        <taxon>Viridiplantae</taxon>
        <taxon>Streptophyta</taxon>
        <taxon>Embryophyta</taxon>
        <taxon>Tracheophyta</taxon>
        <taxon>Spermatophyta</taxon>
        <taxon>Magnoliopsida</taxon>
        <taxon>eudicotyledons</taxon>
        <taxon>Gunneridae</taxon>
        <taxon>Pentapetalae</taxon>
        <taxon>rosids</taxon>
        <taxon>malvids</taxon>
        <taxon>Brassicales</taxon>
        <taxon>Brassicaceae</taxon>
        <taxon>Camelineae</taxon>
        <taxon>Arabidopsis</taxon>
    </lineage>
</organism>
<proteinExistence type="evidence at transcript level"/>